<sequence>MGLKKFFKIKPPEEATPEQNKDTLMELGISVKNPSKKRKEKFAAYGKFANDKAEDKVYAPPGYEQYARPQDELEDLNASPLDANANEATAGSNRGSSGTQDLGNGAESNSMQDPYAIENDDYRYDDDPYARFQANKSNGRGSVNAAPYGDYGGGYNGTSLNSYNNDGPYSNQNTSNSWVNANGRNSLNHSNSTLNVGPSRQTRQPPVSTSTNSLSLDQRSPLANPMQEKRNPYADMNSYGGAYDSNTNRSSGTRQGSSKNANPYASMANDSYSNGNLNRSANPYSSRSVRQPQSQQAPMTYTPSFIASDEAARNSEVDLNEEPRTGEFDFEEVYADKSAENRAALDEPDLNAVMTNEDSIDLNASEVDHSSRQQQQQQWFMDEQQQQQQHFNATNNQYGDQRGYKTFEEIQKEEEARQQQEEDEAVDEIKQEIKFTKQSSVASTRNTLKMAQDAERAGMNTLGMLGHQSEQLNNVEGNLDLMKVQNKVADEKVAELKKLNRSILAVHVSNPFNSKRRRREREEQLKNRKIEEKLMREQTSQQLSQSTQRIEGAMNANNNISEVRERYQRKNVLEKAKRYQFENDEEDDEMELEIDRNLDQIQQVSNRLKKMALTTGKELDSQQKRLNNIEESTDDLDINLHMNTNRLAGIR</sequence>
<reference key="1">
    <citation type="journal article" date="1994" name="Cell">
        <title>Sec9 is a SNAP-25-like component of a yeast SNARE complex that may be the effector of Sec4 function in exocytosis.</title>
        <authorList>
            <person name="Brennwald P."/>
            <person name="Kearns B."/>
            <person name="Champion K."/>
            <person name="Keraenen S."/>
            <person name="Bankaitis V."/>
            <person name="Novick P."/>
        </authorList>
    </citation>
    <scope>NUCLEOTIDE SEQUENCE [GENOMIC DNA]</scope>
</reference>
<reference key="2">
    <citation type="journal article" date="1997" name="Nature">
        <title>The nucleotide sequence of Saccharomyces cerevisiae chromosome VII.</title>
        <authorList>
            <person name="Tettelin H."/>
            <person name="Agostoni-Carbone M.L."/>
            <person name="Albermann K."/>
            <person name="Albers M."/>
            <person name="Arroyo J."/>
            <person name="Backes U."/>
            <person name="Barreiros T."/>
            <person name="Bertani I."/>
            <person name="Bjourson A.J."/>
            <person name="Brueckner M."/>
            <person name="Bruschi C.V."/>
            <person name="Carignani G."/>
            <person name="Castagnoli L."/>
            <person name="Cerdan E."/>
            <person name="Clemente M.L."/>
            <person name="Coblenz A."/>
            <person name="Coglievina M."/>
            <person name="Coissac E."/>
            <person name="Defoor E."/>
            <person name="Del Bino S."/>
            <person name="Delius H."/>
            <person name="Delneri D."/>
            <person name="de Wergifosse P."/>
            <person name="Dujon B."/>
            <person name="Durand P."/>
            <person name="Entian K.-D."/>
            <person name="Eraso P."/>
            <person name="Escribano V."/>
            <person name="Fabiani L."/>
            <person name="Fartmann B."/>
            <person name="Feroli F."/>
            <person name="Feuermann M."/>
            <person name="Frontali L."/>
            <person name="Garcia-Gonzalez M."/>
            <person name="Garcia-Saez M.I."/>
            <person name="Goffeau A."/>
            <person name="Guerreiro P."/>
            <person name="Hani J."/>
            <person name="Hansen M."/>
            <person name="Hebling U."/>
            <person name="Hernandez K."/>
            <person name="Heumann K."/>
            <person name="Hilger F."/>
            <person name="Hofmann B."/>
            <person name="Indge K.J."/>
            <person name="James C.M."/>
            <person name="Klima R."/>
            <person name="Koetter P."/>
            <person name="Kramer B."/>
            <person name="Kramer W."/>
            <person name="Lauquin G."/>
            <person name="Leuther H."/>
            <person name="Louis E.J."/>
            <person name="Maillier E."/>
            <person name="Marconi A."/>
            <person name="Martegani E."/>
            <person name="Mazon M.J."/>
            <person name="Mazzoni C."/>
            <person name="McReynolds A.D.K."/>
            <person name="Melchioretto P."/>
            <person name="Mewes H.-W."/>
            <person name="Minenkova O."/>
            <person name="Mueller-Auer S."/>
            <person name="Nawrocki A."/>
            <person name="Netter P."/>
            <person name="Neu R."/>
            <person name="Nombela C."/>
            <person name="Oliver S.G."/>
            <person name="Panzeri L."/>
            <person name="Paoluzi S."/>
            <person name="Plevani P."/>
            <person name="Portetelle D."/>
            <person name="Portillo F."/>
            <person name="Potier S."/>
            <person name="Purnelle B."/>
            <person name="Rieger M."/>
            <person name="Riles L."/>
            <person name="Rinaldi T."/>
            <person name="Robben J."/>
            <person name="Rodrigues-Pousada C."/>
            <person name="Rodriguez-Belmonte E."/>
            <person name="Rodriguez-Torres A.M."/>
            <person name="Rose M."/>
            <person name="Ruzzi M."/>
            <person name="Saliola M."/>
            <person name="Sanchez-Perez M."/>
            <person name="Schaefer B."/>
            <person name="Schaefer M."/>
            <person name="Scharfe M."/>
            <person name="Schmidheini T."/>
            <person name="Schreer A."/>
            <person name="Skala J."/>
            <person name="Souciet J.-L."/>
            <person name="Steensma H.Y."/>
            <person name="Talla E."/>
            <person name="Thierry A."/>
            <person name="Vandenbol M."/>
            <person name="van der Aart Q.J.M."/>
            <person name="Van Dyck L."/>
            <person name="Vanoni M."/>
            <person name="Verhasselt P."/>
            <person name="Voet M."/>
            <person name="Volckaert G."/>
            <person name="Wambutt R."/>
            <person name="Watson M.D."/>
            <person name="Weber N."/>
            <person name="Wedler E."/>
            <person name="Wedler H."/>
            <person name="Wipfli P."/>
            <person name="Wolf K."/>
            <person name="Wright L.F."/>
            <person name="Zaccaria P."/>
            <person name="Zimmermann M."/>
            <person name="Zollner A."/>
            <person name="Kleine K."/>
        </authorList>
    </citation>
    <scope>NUCLEOTIDE SEQUENCE [LARGE SCALE GENOMIC DNA]</scope>
    <source>
        <strain>ATCC 204508 / S288c</strain>
    </source>
</reference>
<reference key="3">
    <citation type="journal article" date="2014" name="G3 (Bethesda)">
        <title>The reference genome sequence of Saccharomyces cerevisiae: Then and now.</title>
        <authorList>
            <person name="Engel S.R."/>
            <person name="Dietrich F.S."/>
            <person name="Fisk D.G."/>
            <person name="Binkley G."/>
            <person name="Balakrishnan R."/>
            <person name="Costanzo M.C."/>
            <person name="Dwight S.S."/>
            <person name="Hitz B.C."/>
            <person name="Karra K."/>
            <person name="Nash R.S."/>
            <person name="Weng S."/>
            <person name="Wong E.D."/>
            <person name="Lloyd P."/>
            <person name="Skrzypek M.S."/>
            <person name="Miyasato S.R."/>
            <person name="Simison M."/>
            <person name="Cherry J.M."/>
        </authorList>
    </citation>
    <scope>GENOME REANNOTATION</scope>
    <source>
        <strain>ATCC 204508 / S288c</strain>
    </source>
</reference>
<reference key="4">
    <citation type="journal article" date="1999" name="J. Cell Biol.">
        <title>Yeast homologues of tomosyn and lethal giant larvae function in exocytosis and are associated with the plasma membrane SNARE, Sec9.</title>
        <authorList>
            <person name="Lehman K."/>
            <person name="Rossi G."/>
            <person name="Adamo J.E."/>
            <person name="Brennwald P."/>
        </authorList>
    </citation>
    <scope>FUNCTION</scope>
    <scope>INTERACTION WITH SRO7 AND SRO77</scope>
</reference>
<reference key="5">
    <citation type="journal article" date="2005" name="Curr. Biol.">
        <title>Structurally conserved interaction of Lgl family with SNAREs is critical to their cellular function.</title>
        <authorList>
            <person name="Gangar A."/>
            <person name="Rossi G."/>
            <person name="Andreeva A."/>
            <person name="Hales R."/>
            <person name="Brennwald P."/>
        </authorList>
    </citation>
    <scope>INTERACTION WITH SRO7</scope>
</reference>
<reference key="6">
    <citation type="journal article" date="2007" name="J. Proteome Res.">
        <title>Large-scale phosphorylation analysis of alpha-factor-arrested Saccharomyces cerevisiae.</title>
        <authorList>
            <person name="Li X."/>
            <person name="Gerber S.A."/>
            <person name="Rudner A.D."/>
            <person name="Beausoleil S.A."/>
            <person name="Haas W."/>
            <person name="Villen J."/>
            <person name="Elias J.E."/>
            <person name="Gygi S.P."/>
        </authorList>
    </citation>
    <scope>IDENTIFICATION BY MASS SPECTROMETRY [LARGE SCALE ANALYSIS]</scope>
    <source>
        <strain>ADR376</strain>
    </source>
</reference>
<reference key="7">
    <citation type="journal article" date="2008" name="Mol. Cell. Proteomics">
        <title>A multidimensional chromatography technology for in-depth phosphoproteome analysis.</title>
        <authorList>
            <person name="Albuquerque C.P."/>
            <person name="Smolka M.B."/>
            <person name="Payne S.H."/>
            <person name="Bafna V."/>
            <person name="Eng J."/>
            <person name="Zhou H."/>
        </authorList>
    </citation>
    <scope>PHOSPHORYLATION [LARGE SCALE ANALYSIS] AT SER-186; SER-190 AND SER-315</scope>
    <scope>IDENTIFICATION BY MASS SPECTROMETRY [LARGE SCALE ANALYSIS]</scope>
</reference>
<reference key="8">
    <citation type="journal article" date="2009" name="Science">
        <title>Global analysis of Cdk1 substrate phosphorylation sites provides insights into evolution.</title>
        <authorList>
            <person name="Holt L.J."/>
            <person name="Tuch B.B."/>
            <person name="Villen J."/>
            <person name="Johnson A.D."/>
            <person name="Gygi S.P."/>
            <person name="Morgan D.O."/>
        </authorList>
    </citation>
    <scope>PHOSPHORYLATION [LARGE SCALE ANALYSIS] AT SER-79; SER-92; SER-190; SER-213; SER-271; SER-273; SER-315; THR-355 AND SER-359</scope>
    <scope>IDENTIFICATION BY MASS SPECTROMETRY [LARGE SCALE ANALYSIS]</scope>
</reference>
<dbReference type="EMBL" id="L34336">
    <property type="protein sequence ID" value="AAA35034.1"/>
    <property type="molecule type" value="Genomic_DNA"/>
</dbReference>
<dbReference type="EMBL" id="Z72794">
    <property type="protein sequence ID" value="CAA96992.1"/>
    <property type="molecule type" value="Genomic_DNA"/>
</dbReference>
<dbReference type="EMBL" id="BK006941">
    <property type="protein sequence ID" value="DAA08107.1"/>
    <property type="molecule type" value="Genomic_DNA"/>
</dbReference>
<dbReference type="PIR" id="A55100">
    <property type="entry name" value="A55100"/>
</dbReference>
<dbReference type="RefSeq" id="NP_011523.3">
    <property type="nucleotide sequence ID" value="NM_001181138.3"/>
</dbReference>
<dbReference type="PDB" id="3B5N">
    <property type="method" value="X-ray"/>
    <property type="resolution" value="1.60 A"/>
    <property type="chains" value="C/G/K=433-499, D/H/L=589-650"/>
</dbReference>
<dbReference type="PDBsum" id="3B5N"/>
<dbReference type="SMR" id="P40357"/>
<dbReference type="BioGRID" id="33253">
    <property type="interactions" value="206"/>
</dbReference>
<dbReference type="ComplexPortal" id="CPX-1365">
    <property type="entry name" value="Vesicular SNARE complex SSO1-SEC9-SNC1"/>
</dbReference>
<dbReference type="ComplexPortal" id="CPX-1369">
    <property type="entry name" value="Vesicular SNARE complex SSO2-SEC9-SNC1"/>
</dbReference>
<dbReference type="ComplexPortal" id="CPX-5463">
    <property type="entry name" value="Vesicular SNARE complex SSO1-SEC9-SNC2"/>
</dbReference>
<dbReference type="ComplexPortal" id="CPX-5465">
    <property type="entry name" value="Vesicular SNARE complex SSO2-SEC9-SNC2"/>
</dbReference>
<dbReference type="ComplexPortal" id="CPX-5521">
    <property type="entry name" value="Vacuolar SNARE complex SSO1-SEC9-NYV1"/>
</dbReference>
<dbReference type="DIP" id="DIP-1460N"/>
<dbReference type="FunCoup" id="P40357">
    <property type="interactions" value="110"/>
</dbReference>
<dbReference type="IntAct" id="P40357">
    <property type="interactions" value="15"/>
</dbReference>
<dbReference type="MINT" id="P40357"/>
<dbReference type="STRING" id="4932.YGR009C"/>
<dbReference type="GlyGen" id="P40357">
    <property type="glycosylation" value="1 site, 1 O-linked glycan (1 site)"/>
</dbReference>
<dbReference type="iPTMnet" id="P40357"/>
<dbReference type="PaxDb" id="4932-YGR009C"/>
<dbReference type="PeptideAtlas" id="P40357"/>
<dbReference type="EnsemblFungi" id="YGR009C_mRNA">
    <property type="protein sequence ID" value="YGR009C"/>
    <property type="gene ID" value="YGR009C"/>
</dbReference>
<dbReference type="GeneID" id="852892"/>
<dbReference type="KEGG" id="sce:YGR009C"/>
<dbReference type="AGR" id="SGD:S000003241"/>
<dbReference type="SGD" id="S000003241">
    <property type="gene designation" value="SEC9"/>
</dbReference>
<dbReference type="VEuPathDB" id="FungiDB:YGR009C"/>
<dbReference type="eggNOG" id="KOG3065">
    <property type="taxonomic scope" value="Eukaryota"/>
</dbReference>
<dbReference type="GeneTree" id="ENSGT00950000182843"/>
<dbReference type="HOGENOM" id="CLU_020823_1_0_1"/>
<dbReference type="InParanoid" id="P40357"/>
<dbReference type="OMA" id="LDINVHM"/>
<dbReference type="OrthoDB" id="18679at2759"/>
<dbReference type="BioCyc" id="YEAST:G3O-30739-MONOMER"/>
<dbReference type="Reactome" id="R-SCE-199992">
    <property type="pathway name" value="trans-Golgi Network Vesicle Budding"/>
</dbReference>
<dbReference type="Reactome" id="R-SCE-6798695">
    <property type="pathway name" value="Neutrophil degranulation"/>
</dbReference>
<dbReference type="Reactome" id="R-SCE-8980692">
    <property type="pathway name" value="RHOA GTPase cycle"/>
</dbReference>
<dbReference type="Reactome" id="R-SCE-9013026">
    <property type="pathway name" value="RHOB GTPase cycle"/>
</dbReference>
<dbReference type="Reactome" id="R-SCE-9013406">
    <property type="pathway name" value="RHOQ GTPase cycle"/>
</dbReference>
<dbReference type="BioGRID-ORCS" id="852892">
    <property type="hits" value="4 hits in 10 CRISPR screens"/>
</dbReference>
<dbReference type="EvolutionaryTrace" id="P40357"/>
<dbReference type="PRO" id="PR:P40357"/>
<dbReference type="Proteomes" id="UP000002311">
    <property type="component" value="Chromosome VII"/>
</dbReference>
<dbReference type="RNAct" id="P40357">
    <property type="molecule type" value="protein"/>
</dbReference>
<dbReference type="GO" id="GO:0005935">
    <property type="term" value="C:cellular bud neck"/>
    <property type="evidence" value="ECO:0007005"/>
    <property type="project" value="SGD"/>
</dbReference>
<dbReference type="GO" id="GO:0005829">
    <property type="term" value="C:cytosol"/>
    <property type="evidence" value="ECO:0007005"/>
    <property type="project" value="SGD"/>
</dbReference>
<dbReference type="GO" id="GO:0000329">
    <property type="term" value="C:fungal-type vacuole membrane"/>
    <property type="evidence" value="ECO:0000303"/>
    <property type="project" value="ComplexPortal"/>
</dbReference>
<dbReference type="GO" id="GO:0000139">
    <property type="term" value="C:Golgi membrane"/>
    <property type="evidence" value="ECO:0000303"/>
    <property type="project" value="ComplexPortal"/>
</dbReference>
<dbReference type="GO" id="GO:0005886">
    <property type="term" value="C:plasma membrane"/>
    <property type="evidence" value="ECO:0000318"/>
    <property type="project" value="GO_Central"/>
</dbReference>
<dbReference type="GO" id="GO:0031201">
    <property type="term" value="C:SNARE complex"/>
    <property type="evidence" value="ECO:0000314"/>
    <property type="project" value="ComplexPortal"/>
</dbReference>
<dbReference type="GO" id="GO:0005484">
    <property type="term" value="F:SNAP receptor activity"/>
    <property type="evidence" value="ECO:0000314"/>
    <property type="project" value="SGD"/>
</dbReference>
<dbReference type="GO" id="GO:0000149">
    <property type="term" value="F:SNARE binding"/>
    <property type="evidence" value="ECO:0000353"/>
    <property type="project" value="CAFA"/>
</dbReference>
<dbReference type="GO" id="GO:0019905">
    <property type="term" value="F:syntaxin binding"/>
    <property type="evidence" value="ECO:0000318"/>
    <property type="project" value="GO_Central"/>
</dbReference>
<dbReference type="GO" id="GO:0006887">
    <property type="term" value="P:exocytosis"/>
    <property type="evidence" value="ECO:0000316"/>
    <property type="project" value="SGD"/>
</dbReference>
<dbReference type="GO" id="GO:0006893">
    <property type="term" value="P:Golgi to plasma membrane transport"/>
    <property type="evidence" value="ECO:0000303"/>
    <property type="project" value="ComplexPortal"/>
</dbReference>
<dbReference type="GO" id="GO:0048210">
    <property type="term" value="P:Golgi vesicle fusion to target membrane"/>
    <property type="evidence" value="ECO:0000303"/>
    <property type="project" value="ComplexPortal"/>
</dbReference>
<dbReference type="GO" id="GO:0006886">
    <property type="term" value="P:intracellular protein transport"/>
    <property type="evidence" value="ECO:0000303"/>
    <property type="project" value="ComplexPortal"/>
</dbReference>
<dbReference type="GO" id="GO:0035493">
    <property type="term" value="P:SNARE complex assembly"/>
    <property type="evidence" value="ECO:0000315"/>
    <property type="project" value="CAFA"/>
</dbReference>
<dbReference type="GO" id="GO:0006906">
    <property type="term" value="P:vesicle fusion"/>
    <property type="evidence" value="ECO:0000314"/>
    <property type="project" value="ComplexPortal"/>
</dbReference>
<dbReference type="GO" id="GO:0099500">
    <property type="term" value="P:vesicle fusion to plasma membrane"/>
    <property type="evidence" value="ECO:0000303"/>
    <property type="project" value="ComplexPortal"/>
</dbReference>
<dbReference type="CDD" id="cd15857">
    <property type="entry name" value="SNARE_SEC9C"/>
    <property type="match status" value="1"/>
</dbReference>
<dbReference type="CDD" id="cd15886">
    <property type="entry name" value="SNARE_SEC9N"/>
    <property type="match status" value="1"/>
</dbReference>
<dbReference type="DisProt" id="DP00128"/>
<dbReference type="FunFam" id="1.20.5.110:FF:000048">
    <property type="entry name" value="Protein transport protein SEC9"/>
    <property type="match status" value="1"/>
</dbReference>
<dbReference type="FunFam" id="1.20.5.110:FF:000043">
    <property type="entry name" value="Protein transport protein sec9"/>
    <property type="match status" value="1"/>
</dbReference>
<dbReference type="Gene3D" id="1.20.5.110">
    <property type="match status" value="2"/>
</dbReference>
<dbReference type="InterPro" id="IPR000727">
    <property type="entry name" value="T_SNARE_dom"/>
</dbReference>
<dbReference type="PANTHER" id="PTHR19305">
    <property type="entry name" value="SYNAPTOSOMAL ASSOCIATED PROTEIN"/>
    <property type="match status" value="1"/>
</dbReference>
<dbReference type="PANTHER" id="PTHR19305:SF9">
    <property type="entry name" value="SYNAPTOSOMAL-ASSOCIATED PROTEIN 29"/>
    <property type="match status" value="1"/>
</dbReference>
<dbReference type="SMART" id="SM00397">
    <property type="entry name" value="t_SNARE"/>
    <property type="match status" value="2"/>
</dbReference>
<dbReference type="SUPFAM" id="SSF58038">
    <property type="entry name" value="SNARE fusion complex"/>
    <property type="match status" value="2"/>
</dbReference>
<dbReference type="PROSITE" id="PS50192">
    <property type="entry name" value="T_SNARE"/>
    <property type="match status" value="2"/>
</dbReference>
<organism>
    <name type="scientific">Saccharomyces cerevisiae (strain ATCC 204508 / S288c)</name>
    <name type="common">Baker's yeast</name>
    <dbReference type="NCBI Taxonomy" id="559292"/>
    <lineage>
        <taxon>Eukaryota</taxon>
        <taxon>Fungi</taxon>
        <taxon>Dikarya</taxon>
        <taxon>Ascomycota</taxon>
        <taxon>Saccharomycotina</taxon>
        <taxon>Saccharomycetes</taxon>
        <taxon>Saccharomycetales</taxon>
        <taxon>Saccharomycetaceae</taxon>
        <taxon>Saccharomyces</taxon>
    </lineage>
</organism>
<evidence type="ECO:0000255" key="1">
    <source>
        <dbReference type="PROSITE-ProRule" id="PRU00202"/>
    </source>
</evidence>
<evidence type="ECO:0000256" key="2">
    <source>
        <dbReference type="SAM" id="MobiDB-lite"/>
    </source>
</evidence>
<evidence type="ECO:0000269" key="3">
    <source>
    </source>
</evidence>
<evidence type="ECO:0000269" key="4">
    <source>
    </source>
</evidence>
<evidence type="ECO:0000305" key="5"/>
<evidence type="ECO:0007744" key="6">
    <source>
    </source>
</evidence>
<evidence type="ECO:0007744" key="7">
    <source>
    </source>
</evidence>
<evidence type="ECO:0007829" key="8">
    <source>
        <dbReference type="PDB" id="3B5N"/>
    </source>
</evidence>
<protein>
    <recommendedName>
        <fullName>Protein transport protein SEC9</fullName>
    </recommendedName>
</protein>
<keyword id="KW-0002">3D-structure</keyword>
<keyword id="KW-0175">Coiled coil</keyword>
<keyword id="KW-0597">Phosphoprotein</keyword>
<keyword id="KW-0653">Protein transport</keyword>
<keyword id="KW-1185">Reference proteome</keyword>
<keyword id="KW-0677">Repeat</keyword>
<keyword id="KW-0813">Transport</keyword>
<name>SEC9_YEAST</name>
<gene>
    <name type="primary">SEC9</name>
    <name type="synonym">HSS7</name>
    <name type="ordered locus">YGR009C</name>
</gene>
<comment type="function">
    <text evidence="3">Component of a SNARE complex that may be the effector of SEC4 function in exocytosis.</text>
</comment>
<comment type="subunit">
    <text evidence="3 4">Interacts with SRO7 and SRO77.</text>
</comment>
<comment type="interaction">
    <interactant intactId="EBI-16904">
        <id>P40357</id>
    </interactant>
    <interactant intactId="EBI-17573">
        <id>Q12038</id>
        <label>SRO7</label>
    </interactant>
    <organismsDiffer>false</organismsDiffer>
    <experiments>11</experiments>
</comment>
<comment type="interaction">
    <interactant intactId="EBI-16904">
        <id>P40357</id>
    </interactant>
    <interactant intactId="EBI-2206525">
        <id>P32867</id>
        <label>SSO1</label>
    </interactant>
    <organismsDiffer>false</organismsDiffer>
    <experiments>14</experiments>
</comment>
<comment type="similarity">
    <text evidence="5">Belongs to the SNAP-25 family.</text>
</comment>
<proteinExistence type="evidence at protein level"/>
<accession>P40357</accession>
<accession>D6VUE6</accession>
<feature type="chain" id="PRO_0000213613" description="Protein transport protein SEC9">
    <location>
        <begin position="1"/>
        <end position="651"/>
    </location>
</feature>
<feature type="domain" description="t-SNARE coiled-coil homology 1" evidence="1">
    <location>
        <begin position="434"/>
        <end position="496"/>
    </location>
</feature>
<feature type="domain" description="t-SNARE coiled-coil homology 2" evidence="1">
    <location>
        <begin position="588"/>
        <end position="650"/>
    </location>
</feature>
<feature type="region of interest" description="Disordered" evidence="2">
    <location>
        <begin position="1"/>
        <end position="22"/>
    </location>
</feature>
<feature type="region of interest" description="Disordered" evidence="2">
    <location>
        <begin position="53"/>
        <end position="299"/>
    </location>
</feature>
<feature type="region of interest" description="Disordered" evidence="2">
    <location>
        <begin position="313"/>
        <end position="332"/>
    </location>
</feature>
<feature type="compositionally biased region" description="Polar residues" evidence="2">
    <location>
        <begin position="86"/>
        <end position="112"/>
    </location>
</feature>
<feature type="compositionally biased region" description="Basic and acidic residues" evidence="2">
    <location>
        <begin position="120"/>
        <end position="129"/>
    </location>
</feature>
<feature type="compositionally biased region" description="Polar residues" evidence="2">
    <location>
        <begin position="157"/>
        <end position="218"/>
    </location>
</feature>
<feature type="compositionally biased region" description="Polar residues" evidence="2">
    <location>
        <begin position="244"/>
        <end position="284"/>
    </location>
</feature>
<feature type="compositionally biased region" description="Low complexity" evidence="2">
    <location>
        <begin position="285"/>
        <end position="296"/>
    </location>
</feature>
<feature type="compositionally biased region" description="Basic and acidic residues" evidence="2">
    <location>
        <begin position="313"/>
        <end position="327"/>
    </location>
</feature>
<feature type="modified residue" description="Phosphoserine" evidence="7">
    <location>
        <position position="79"/>
    </location>
</feature>
<feature type="modified residue" description="Phosphoserine" evidence="7">
    <location>
        <position position="92"/>
    </location>
</feature>
<feature type="modified residue" description="Phosphoserine" evidence="6">
    <location>
        <position position="186"/>
    </location>
</feature>
<feature type="modified residue" description="Phosphoserine" evidence="6 7">
    <location>
        <position position="190"/>
    </location>
</feature>
<feature type="modified residue" description="Phosphoserine" evidence="7">
    <location>
        <position position="213"/>
    </location>
</feature>
<feature type="modified residue" description="Phosphoserine" evidence="7">
    <location>
        <position position="271"/>
    </location>
</feature>
<feature type="modified residue" description="Phosphoserine" evidence="7">
    <location>
        <position position="273"/>
    </location>
</feature>
<feature type="modified residue" description="Phosphoserine" evidence="6 7">
    <location>
        <position position="315"/>
    </location>
</feature>
<feature type="modified residue" description="Phosphothreonine" evidence="7">
    <location>
        <position position="355"/>
    </location>
</feature>
<feature type="modified residue" description="Phosphoserine" evidence="7">
    <location>
        <position position="359"/>
    </location>
</feature>
<feature type="helix" evidence="8">
    <location>
        <begin position="433"/>
        <end position="499"/>
    </location>
</feature>
<feature type="helix" evidence="8">
    <location>
        <begin position="589"/>
        <end position="648"/>
    </location>
</feature>